<keyword id="KW-0007">Acetylation</keyword>
<keyword id="KW-1003">Cell membrane</keyword>
<keyword id="KW-0333">Golgi apparatus</keyword>
<keyword id="KW-0342">GTP-binding</keyword>
<keyword id="KW-0378">Hydrolase</keyword>
<keyword id="KW-0449">Lipoprotein</keyword>
<keyword id="KW-0472">Membrane</keyword>
<keyword id="KW-0547">Nucleotide-binding</keyword>
<keyword id="KW-0564">Palmitate</keyword>
<keyword id="KW-0656">Proto-oncogene</keyword>
<keyword id="KW-1185">Reference proteome</keyword>
<keyword id="KW-0832">Ubl conjugation</keyword>
<feature type="chain" id="PRO_0000326477" description="GTPase HRas">
    <location>
        <begin position="1"/>
        <end position="96"/>
    </location>
</feature>
<feature type="initiator methionine" description="Removed; alternate" evidence="2">
    <location>
        <position position="1"/>
    </location>
</feature>
<feature type="chain" id="PRO_0000082640" description="GTPase HRas, N-terminally processed">
    <location>
        <begin position="2"/>
        <end position="96"/>
    </location>
</feature>
<feature type="short sequence motif" description="Effector region">
    <location>
        <begin position="32"/>
        <end position="40"/>
    </location>
</feature>
<feature type="binding site" evidence="1">
    <location>
        <begin position="10"/>
        <end position="17"/>
    </location>
    <ligand>
        <name>GTP</name>
        <dbReference type="ChEBI" id="CHEBI:37565"/>
    </ligand>
</feature>
<feature type="binding site" evidence="1">
    <location>
        <begin position="57"/>
        <end position="61"/>
    </location>
    <ligand>
        <name>GTP</name>
        <dbReference type="ChEBI" id="CHEBI:37565"/>
    </ligand>
</feature>
<feature type="modified residue" description="N-acetylmethionine" evidence="2">
    <location>
        <position position="1"/>
    </location>
</feature>
<feature type="modified residue" description="N-acetylthreonine; in GTPase HRas, N-terminally processed" evidence="2">
    <location>
        <position position="2"/>
    </location>
</feature>
<feature type="non-terminal residue">
    <location>
        <position position="96"/>
    </location>
</feature>
<name>RASH_MESAU</name>
<proteinExistence type="inferred from homology"/>
<protein>
    <recommendedName>
        <fullName>GTPase HRas</fullName>
        <ecNumber evidence="2">3.6.5.2</ecNumber>
    </recommendedName>
    <alternativeName>
        <fullName>H-Ras-1</fullName>
    </alternativeName>
    <alternativeName>
        <fullName>Transforming protein p21</fullName>
    </alternativeName>
    <alternativeName>
        <fullName>c-H-ras</fullName>
    </alternativeName>
    <alternativeName>
        <fullName>p21ras</fullName>
    </alternativeName>
    <component>
        <recommendedName>
            <fullName>GTPase HRas, N-terminally processed</fullName>
        </recommendedName>
    </component>
</protein>
<sequence length="96" mass="10848">MTEYKLVVVGAGGVGKSALTIQLIQNHFVDEYDPTIEDSYRKQVVIDGETCLLDILDTAGQEEYSAMRDQYMRTGEGFLCVFAINNTKSFEDIHQY</sequence>
<organism>
    <name type="scientific">Mesocricetus auratus</name>
    <name type="common">Golden hamster</name>
    <dbReference type="NCBI Taxonomy" id="10036"/>
    <lineage>
        <taxon>Eukaryota</taxon>
        <taxon>Metazoa</taxon>
        <taxon>Chordata</taxon>
        <taxon>Craniata</taxon>
        <taxon>Vertebrata</taxon>
        <taxon>Euteleostomi</taxon>
        <taxon>Mammalia</taxon>
        <taxon>Eutheria</taxon>
        <taxon>Euarchontoglires</taxon>
        <taxon>Glires</taxon>
        <taxon>Rodentia</taxon>
        <taxon>Myomorpha</taxon>
        <taxon>Muroidea</taxon>
        <taxon>Cricetidae</taxon>
        <taxon>Cricetinae</taxon>
        <taxon>Mesocricetus</taxon>
    </lineage>
</organism>
<evidence type="ECO:0000250" key="1"/>
<evidence type="ECO:0000250" key="2">
    <source>
        <dbReference type="UniProtKB" id="P01112"/>
    </source>
</evidence>
<evidence type="ECO:0000250" key="3">
    <source>
        <dbReference type="UniProtKB" id="P20171"/>
    </source>
</evidence>
<evidence type="ECO:0000250" key="4">
    <source>
        <dbReference type="UniProtKB" id="Q61411"/>
    </source>
</evidence>
<evidence type="ECO:0000305" key="5"/>
<accession>Q60529</accession>
<comment type="function">
    <text>Ras proteins bind GDP/GTP and possess intrinsic GTPase activity.</text>
</comment>
<comment type="catalytic activity">
    <reaction evidence="2">
        <text>GTP + H2O = GDP + phosphate + H(+)</text>
        <dbReference type="Rhea" id="RHEA:19669"/>
        <dbReference type="ChEBI" id="CHEBI:15377"/>
        <dbReference type="ChEBI" id="CHEBI:15378"/>
        <dbReference type="ChEBI" id="CHEBI:37565"/>
        <dbReference type="ChEBI" id="CHEBI:43474"/>
        <dbReference type="ChEBI" id="CHEBI:58189"/>
        <dbReference type="EC" id="3.6.5.2"/>
    </reaction>
</comment>
<comment type="activity regulation">
    <text>Alternates between an inactive form bound to GDP and an active form bound to GTP. Activated by a guanine nucleotide-exchange factor (GEF) and inactivated by a GTPase-activating protein (GAP).</text>
</comment>
<comment type="subunit">
    <text evidence="2 3 4">In its GTP-bound form interacts with PLCE1 (By similarity). Interacts with TBC1D10C (By similarity). Interacts with RGL3 (By similarity). Interacts with HSPD1 (By similarity). Found in a complex with at least BRAF, HRAS, MAP2K1, MAPK3 and RGS14 (By similarity). Interacts (active GTP-bound form) with RGS14 (via RBD 1 domain) (By similarity). Forms a signaling complex with RASGRP1 and DGKZ (By similarity). Interacts with RASSF5 (By similarity). Interacts with PDE6D (By similarity). Interacts with IKZF3 (By similarity). Interacts with RACK1 (By similarity). Interacts with PIK3CG; the interaction is required for membrane recruitment and beta-gamma G protein dimer-dependent activation of the PI3K gamma complex PIK3CG:PIK3R6 (By similarity). Interacts with RAPGEF2 (By similarity). Interacts (active GTP-bound form) with both SHOC2 and PP1c (all isoforms) to form a tertiary complex; SHOC2 and PP1c preferably bind M-Ras/MRAS, but they also bind K-Ras/KRAS, N-Ras/NRAS and H-Ras/HRAS (By similarity). Interacts (in GTP-bound form) with Oog1 (By similarity). Interacts (GTP-bound form) with MAPKAP1/SIN1; inhibiting H-Ras/HRAS activity (By similarity).</text>
</comment>
<comment type="subcellular location">
    <subcellularLocation>
        <location evidence="3">Cell membrane</location>
    </subcellularLocation>
    <subcellularLocation>
        <location evidence="1">Cell membrane</location>
        <topology evidence="1">Lipid-anchor</topology>
        <orientation evidence="1">Cytoplasmic side</orientation>
    </subcellularLocation>
    <subcellularLocation>
        <location evidence="1">Golgi apparatus</location>
    </subcellularLocation>
    <subcellularLocation>
        <location evidence="1">Golgi apparatus membrane</location>
        <topology evidence="1">Lipid-anchor</topology>
    </subcellularLocation>
    <text evidence="1">Shuttles between the plasma membrane and the Golgi apparatus. The active GTP-bound form is localized most strongly to membranes than the inactive GDP-bound form (By similarity).</text>
</comment>
<comment type="PTM">
    <text evidence="2">Ubiquitinated by the BCR(LZTR1) E3 ubiquitin ligase complex at Lys-170 in a non-degradative manner, leading to inhibit Ras signaling by decreasing Ras association with membranes.</text>
</comment>
<comment type="similarity">
    <text evidence="5">Belongs to the small GTPase superfamily. Ras family.</text>
</comment>
<reference key="1">
    <citation type="submission" date="1995-10" db="EMBL/GenBank/DDBJ databases">
        <authorList>
            <person name="Chakravarti D."/>
            <person name="Cavalieri E.L."/>
            <person name="Rogan E.G."/>
        </authorList>
    </citation>
    <scope>NUCLEOTIDE SEQUENCE [GENOMIC DNA]</scope>
    <source>
        <tissue>Kidney</tissue>
    </source>
</reference>
<dbReference type="EC" id="3.6.5.2" evidence="2"/>
<dbReference type="EMBL" id="U38462">
    <property type="protein sequence ID" value="AAB60504.1"/>
    <property type="molecule type" value="Genomic_DNA"/>
</dbReference>
<dbReference type="SMR" id="Q60529"/>
<dbReference type="STRING" id="10036.ENSMAUP00000022628"/>
<dbReference type="eggNOG" id="KOG0395">
    <property type="taxonomic scope" value="Eukaryota"/>
</dbReference>
<dbReference type="Proteomes" id="UP000189706">
    <property type="component" value="Unplaced"/>
</dbReference>
<dbReference type="GO" id="GO:0005794">
    <property type="term" value="C:Golgi apparatus"/>
    <property type="evidence" value="ECO:0000250"/>
    <property type="project" value="UniProtKB"/>
</dbReference>
<dbReference type="GO" id="GO:0000139">
    <property type="term" value="C:Golgi membrane"/>
    <property type="evidence" value="ECO:0007669"/>
    <property type="project" value="UniProtKB-SubCell"/>
</dbReference>
<dbReference type="GO" id="GO:0005886">
    <property type="term" value="C:plasma membrane"/>
    <property type="evidence" value="ECO:0000250"/>
    <property type="project" value="UniProtKB"/>
</dbReference>
<dbReference type="GO" id="GO:0003925">
    <property type="term" value="F:G protein activity"/>
    <property type="evidence" value="ECO:0007669"/>
    <property type="project" value="UniProtKB-EC"/>
</dbReference>
<dbReference type="GO" id="GO:0005525">
    <property type="term" value="F:GTP binding"/>
    <property type="evidence" value="ECO:0000250"/>
    <property type="project" value="UniProtKB"/>
</dbReference>
<dbReference type="GO" id="GO:0007165">
    <property type="term" value="P:signal transduction"/>
    <property type="evidence" value="ECO:0007669"/>
    <property type="project" value="InterPro"/>
</dbReference>
<dbReference type="FunFam" id="3.40.50.300:FF:001928">
    <property type="entry name" value="V-Ha-ras Harvey rat sarcoma viral oncogene-like protein"/>
    <property type="match status" value="1"/>
</dbReference>
<dbReference type="Gene3D" id="3.40.50.300">
    <property type="entry name" value="P-loop containing nucleotide triphosphate hydrolases"/>
    <property type="match status" value="1"/>
</dbReference>
<dbReference type="InterPro" id="IPR027417">
    <property type="entry name" value="P-loop_NTPase"/>
</dbReference>
<dbReference type="InterPro" id="IPR005225">
    <property type="entry name" value="Small_GTP-bd"/>
</dbReference>
<dbReference type="InterPro" id="IPR001806">
    <property type="entry name" value="Small_GTPase"/>
</dbReference>
<dbReference type="InterPro" id="IPR020849">
    <property type="entry name" value="Small_GTPase_Ras-type"/>
</dbReference>
<dbReference type="NCBIfam" id="TIGR00231">
    <property type="entry name" value="small_GTP"/>
    <property type="match status" value="1"/>
</dbReference>
<dbReference type="PANTHER" id="PTHR24070">
    <property type="entry name" value="RAS, DI-RAS, AND RHEB FAMILY MEMBERS OF SMALL GTPASE SUPERFAMILY"/>
    <property type="match status" value="1"/>
</dbReference>
<dbReference type="Pfam" id="PF00071">
    <property type="entry name" value="Ras"/>
    <property type="match status" value="1"/>
</dbReference>
<dbReference type="PRINTS" id="PR00449">
    <property type="entry name" value="RASTRNSFRMNG"/>
</dbReference>
<dbReference type="SMART" id="SM00175">
    <property type="entry name" value="RAB"/>
    <property type="match status" value="1"/>
</dbReference>
<dbReference type="SMART" id="SM00173">
    <property type="entry name" value="RAS"/>
    <property type="match status" value="1"/>
</dbReference>
<dbReference type="SMART" id="SM00174">
    <property type="entry name" value="RHO"/>
    <property type="match status" value="1"/>
</dbReference>
<dbReference type="SUPFAM" id="SSF52540">
    <property type="entry name" value="P-loop containing nucleoside triphosphate hydrolases"/>
    <property type="match status" value="1"/>
</dbReference>
<dbReference type="PROSITE" id="PS51421">
    <property type="entry name" value="RAS"/>
    <property type="match status" value="1"/>
</dbReference>
<gene>
    <name type="primary">HRAS</name>
    <name type="synonym">HRAS1</name>
</gene>